<comment type="miscellaneous">
    <text>This gene belongs to a multigene family expressed in a large variety of tumors whereas in normal tissues, expression is restricted to germ cells. These genes organized in clustered repeats, have a high degree of predicted sequence identity, but differ by scattered single nucleotide substitution. Their sequences contain either the antigenic peptide YYWPRPRRY or YRPRPRRY which is recognized by cytotoxic T-cells.</text>
</comment>
<comment type="similarity">
    <text evidence="2">Belongs to the GAGE family.</text>
</comment>
<comment type="caution">
    <text evidence="2">The first GAGE nomenclature was based on identified mRNA sequences, but the high identity of the GAGE members made impossible to separate products of paralogous genes from polymorph products. PubMed:18179644 presented a new GAGE gene nomenclature based on the identified genes and their products.</text>
</comment>
<comment type="sequence caution" evidence="2">
    <conflict type="erroneous gene model prediction">
        <sequence resource="EMBL-CDS" id="CAI95421"/>
    </conflict>
</comment>
<proteinExistence type="inferred from homology"/>
<dbReference type="EMBL" id="BX649339">
    <property type="protein sequence ID" value="CAI95421.1"/>
    <property type="status" value="ALT_SEQ"/>
    <property type="molecule type" value="Genomic_DNA"/>
</dbReference>
<dbReference type="EMBL" id="AC233302">
    <property type="status" value="NOT_ANNOTATED_CDS"/>
    <property type="molecule type" value="Genomic_DNA"/>
</dbReference>
<dbReference type="BioGRID" id="117809">
    <property type="interactions" value="35"/>
</dbReference>
<dbReference type="IntAct" id="Q4V326">
    <property type="interactions" value="30"/>
</dbReference>
<dbReference type="iPTMnet" id="Q4V326"/>
<dbReference type="PhosphoSitePlus" id="Q4V326"/>
<dbReference type="BioMuta" id="GAGE2E"/>
<dbReference type="DMDM" id="74753567"/>
<dbReference type="jPOST" id="Q4V326"/>
<dbReference type="MassIVE" id="Q4V326"/>
<dbReference type="PeptideAtlas" id="Q4V326"/>
<dbReference type="Pumba" id="Q4V326"/>
<dbReference type="Antibodypedia" id="78924">
    <property type="antibodies" value="10 antibodies from 3 providers"/>
</dbReference>
<dbReference type="DNASU" id="26749"/>
<dbReference type="Ensembl" id="ENST00000621907.1">
    <property type="protein sequence ID" value="ENSP00000478568.1"/>
    <property type="gene ID" value="ENSG00000275113.1"/>
</dbReference>
<dbReference type="AGR" id="HGNC:31960"/>
<dbReference type="GeneCards" id="GAGE2E"/>
<dbReference type="HGNC" id="HGNC:31960">
    <property type="gene designation" value="GAGE2E"/>
</dbReference>
<dbReference type="HPA" id="ENSG00000275113">
    <property type="expression patterns" value="Group enriched (stomach, testis)"/>
</dbReference>
<dbReference type="MIM" id="300736">
    <property type="type" value="gene"/>
</dbReference>
<dbReference type="neXtProt" id="NX_Q4V326"/>
<dbReference type="PharmGKB" id="PA162389276"/>
<dbReference type="VEuPathDB" id="HostDB:ENSG00000275113"/>
<dbReference type="GeneTree" id="ENSGT00940000153097"/>
<dbReference type="InParanoid" id="Q4V326"/>
<dbReference type="OrthoDB" id="9539459at2759"/>
<dbReference type="PAN-GO" id="Q4V326">
    <property type="GO annotations" value="0 GO annotations based on evolutionary models"/>
</dbReference>
<dbReference type="PhylomeDB" id="Q4V326"/>
<dbReference type="TreeFam" id="TF340669"/>
<dbReference type="PathwayCommons" id="Q4V326"/>
<dbReference type="SignaLink" id="Q4V326"/>
<dbReference type="Pharos" id="Q4V326">
    <property type="development level" value="Tdark"/>
</dbReference>
<dbReference type="PRO" id="PR:Q4V326"/>
<dbReference type="Proteomes" id="UP000005640">
    <property type="component" value="Chromosome X"/>
</dbReference>
<dbReference type="RNAct" id="Q4V326">
    <property type="molecule type" value="protein"/>
</dbReference>
<dbReference type="Bgee" id="ENSG00000275113">
    <property type="expression patterns" value="Expressed in male germ line stem cell (sensu Vertebrata) in testis and 77 other cell types or tissues"/>
</dbReference>
<dbReference type="InterPro" id="IPR031320">
    <property type="entry name" value="GAGE"/>
</dbReference>
<dbReference type="InterPro" id="IPR008625">
    <property type="entry name" value="GAGE_fam"/>
</dbReference>
<dbReference type="PANTHER" id="PTHR14047:SF30">
    <property type="entry name" value="G ANTIGEN 1-RELATED"/>
    <property type="match status" value="1"/>
</dbReference>
<dbReference type="PANTHER" id="PTHR14047">
    <property type="entry name" value="P ANTIGEN FAMILY MEMBER 5-RELATED"/>
    <property type="match status" value="1"/>
</dbReference>
<dbReference type="Pfam" id="PF05831">
    <property type="entry name" value="GAGE"/>
    <property type="match status" value="1"/>
</dbReference>
<dbReference type="SMART" id="SM01379">
    <property type="entry name" value="GAGE"/>
    <property type="match status" value="1"/>
</dbReference>
<feature type="chain" id="PRO_0000395446" description="G antigen 2E">
    <location>
        <begin position="1"/>
        <end position="110"/>
    </location>
</feature>
<feature type="region of interest" description="Disordered" evidence="1">
    <location>
        <begin position="1"/>
        <end position="110"/>
    </location>
</feature>
<feature type="compositionally biased region" description="Acidic residues" evidence="1">
    <location>
        <begin position="32"/>
        <end position="45"/>
    </location>
</feature>
<feature type="compositionally biased region" description="Acidic residues" evidence="1">
    <location>
        <begin position="87"/>
        <end position="96"/>
    </location>
</feature>
<feature type="sequence conflict" description="In Ref. 1; CAI95421." evidence="2" ref="1">
    <original>Q</original>
    <variation>E</variation>
    <location>
        <position position="19"/>
    </location>
</feature>
<feature type="sequence conflict" description="In Ref. 1; CAI95421." evidence="2" ref="1">
    <original>H</original>
    <variation>D</variation>
    <location>
        <position position="75"/>
    </location>
</feature>
<sequence>MSWRGRSTYYWPRPRRYVQPPEMIGPMRPEQFSDEVEPATPEEGEPATQRQDPAAAQEGEDEGASAGQGPKPEAHSQEQGHPQTGCECEDGPDGQEMDPPNPEEVKTPEE</sequence>
<gene>
    <name type="primary">GAGE2E</name>
</gene>
<name>GAG2E_HUMAN</name>
<reference key="1">
    <citation type="journal article" date="2005" name="Nature">
        <title>The DNA sequence of the human X chromosome.</title>
        <authorList>
            <person name="Ross M.T."/>
            <person name="Grafham D.V."/>
            <person name="Coffey A.J."/>
            <person name="Scherer S."/>
            <person name="McLay K."/>
            <person name="Muzny D."/>
            <person name="Platzer M."/>
            <person name="Howell G.R."/>
            <person name="Burrows C."/>
            <person name="Bird C.P."/>
            <person name="Frankish A."/>
            <person name="Lovell F.L."/>
            <person name="Howe K.L."/>
            <person name="Ashurst J.L."/>
            <person name="Fulton R.S."/>
            <person name="Sudbrak R."/>
            <person name="Wen G."/>
            <person name="Jones M.C."/>
            <person name="Hurles M.E."/>
            <person name="Andrews T.D."/>
            <person name="Scott C.E."/>
            <person name="Searle S."/>
            <person name="Ramser J."/>
            <person name="Whittaker A."/>
            <person name="Deadman R."/>
            <person name="Carter N.P."/>
            <person name="Hunt S.E."/>
            <person name="Chen R."/>
            <person name="Cree A."/>
            <person name="Gunaratne P."/>
            <person name="Havlak P."/>
            <person name="Hodgson A."/>
            <person name="Metzker M.L."/>
            <person name="Richards S."/>
            <person name="Scott G."/>
            <person name="Steffen D."/>
            <person name="Sodergren E."/>
            <person name="Wheeler D.A."/>
            <person name="Worley K.C."/>
            <person name="Ainscough R."/>
            <person name="Ambrose K.D."/>
            <person name="Ansari-Lari M.A."/>
            <person name="Aradhya S."/>
            <person name="Ashwell R.I."/>
            <person name="Babbage A.K."/>
            <person name="Bagguley C.L."/>
            <person name="Ballabio A."/>
            <person name="Banerjee R."/>
            <person name="Barker G.E."/>
            <person name="Barlow K.F."/>
            <person name="Barrett I.P."/>
            <person name="Bates K.N."/>
            <person name="Beare D.M."/>
            <person name="Beasley H."/>
            <person name="Beasley O."/>
            <person name="Beck A."/>
            <person name="Bethel G."/>
            <person name="Blechschmidt K."/>
            <person name="Brady N."/>
            <person name="Bray-Allen S."/>
            <person name="Bridgeman A.M."/>
            <person name="Brown A.J."/>
            <person name="Brown M.J."/>
            <person name="Bonnin D."/>
            <person name="Bruford E.A."/>
            <person name="Buhay C."/>
            <person name="Burch P."/>
            <person name="Burford D."/>
            <person name="Burgess J."/>
            <person name="Burrill W."/>
            <person name="Burton J."/>
            <person name="Bye J.M."/>
            <person name="Carder C."/>
            <person name="Carrel L."/>
            <person name="Chako J."/>
            <person name="Chapman J.C."/>
            <person name="Chavez D."/>
            <person name="Chen E."/>
            <person name="Chen G."/>
            <person name="Chen Y."/>
            <person name="Chen Z."/>
            <person name="Chinault C."/>
            <person name="Ciccodicola A."/>
            <person name="Clark S.Y."/>
            <person name="Clarke G."/>
            <person name="Clee C.M."/>
            <person name="Clegg S."/>
            <person name="Clerc-Blankenburg K."/>
            <person name="Clifford K."/>
            <person name="Cobley V."/>
            <person name="Cole C.G."/>
            <person name="Conquer J.S."/>
            <person name="Corby N."/>
            <person name="Connor R.E."/>
            <person name="David R."/>
            <person name="Davies J."/>
            <person name="Davis C."/>
            <person name="Davis J."/>
            <person name="Delgado O."/>
            <person name="Deshazo D."/>
            <person name="Dhami P."/>
            <person name="Ding Y."/>
            <person name="Dinh H."/>
            <person name="Dodsworth S."/>
            <person name="Draper H."/>
            <person name="Dugan-Rocha S."/>
            <person name="Dunham A."/>
            <person name="Dunn M."/>
            <person name="Durbin K.J."/>
            <person name="Dutta I."/>
            <person name="Eades T."/>
            <person name="Ellwood M."/>
            <person name="Emery-Cohen A."/>
            <person name="Errington H."/>
            <person name="Evans K.L."/>
            <person name="Faulkner L."/>
            <person name="Francis F."/>
            <person name="Frankland J."/>
            <person name="Fraser A.E."/>
            <person name="Galgoczy P."/>
            <person name="Gilbert J."/>
            <person name="Gill R."/>
            <person name="Gloeckner G."/>
            <person name="Gregory S.G."/>
            <person name="Gribble S."/>
            <person name="Griffiths C."/>
            <person name="Grocock R."/>
            <person name="Gu Y."/>
            <person name="Gwilliam R."/>
            <person name="Hamilton C."/>
            <person name="Hart E.A."/>
            <person name="Hawes A."/>
            <person name="Heath P.D."/>
            <person name="Heitmann K."/>
            <person name="Hennig S."/>
            <person name="Hernandez J."/>
            <person name="Hinzmann B."/>
            <person name="Ho S."/>
            <person name="Hoffs M."/>
            <person name="Howden P.J."/>
            <person name="Huckle E.J."/>
            <person name="Hume J."/>
            <person name="Hunt P.J."/>
            <person name="Hunt A.R."/>
            <person name="Isherwood J."/>
            <person name="Jacob L."/>
            <person name="Johnson D."/>
            <person name="Jones S."/>
            <person name="de Jong P.J."/>
            <person name="Joseph S.S."/>
            <person name="Keenan S."/>
            <person name="Kelly S."/>
            <person name="Kershaw J.K."/>
            <person name="Khan Z."/>
            <person name="Kioschis P."/>
            <person name="Klages S."/>
            <person name="Knights A.J."/>
            <person name="Kosiura A."/>
            <person name="Kovar-Smith C."/>
            <person name="Laird G.K."/>
            <person name="Langford C."/>
            <person name="Lawlor S."/>
            <person name="Leversha M."/>
            <person name="Lewis L."/>
            <person name="Liu W."/>
            <person name="Lloyd C."/>
            <person name="Lloyd D.M."/>
            <person name="Loulseged H."/>
            <person name="Loveland J.E."/>
            <person name="Lovell J.D."/>
            <person name="Lozado R."/>
            <person name="Lu J."/>
            <person name="Lyne R."/>
            <person name="Ma J."/>
            <person name="Maheshwari M."/>
            <person name="Matthews L.H."/>
            <person name="McDowall J."/>
            <person name="McLaren S."/>
            <person name="McMurray A."/>
            <person name="Meidl P."/>
            <person name="Meitinger T."/>
            <person name="Milne S."/>
            <person name="Miner G."/>
            <person name="Mistry S.L."/>
            <person name="Morgan M."/>
            <person name="Morris S."/>
            <person name="Mueller I."/>
            <person name="Mullikin J.C."/>
            <person name="Nguyen N."/>
            <person name="Nordsiek G."/>
            <person name="Nyakatura G."/>
            <person name="O'dell C.N."/>
            <person name="Okwuonu G."/>
            <person name="Palmer S."/>
            <person name="Pandian R."/>
            <person name="Parker D."/>
            <person name="Parrish J."/>
            <person name="Pasternak S."/>
            <person name="Patel D."/>
            <person name="Pearce A.V."/>
            <person name="Pearson D.M."/>
            <person name="Pelan S.E."/>
            <person name="Perez L."/>
            <person name="Porter K.M."/>
            <person name="Ramsey Y."/>
            <person name="Reichwald K."/>
            <person name="Rhodes S."/>
            <person name="Ridler K.A."/>
            <person name="Schlessinger D."/>
            <person name="Schueler M.G."/>
            <person name="Sehra H.K."/>
            <person name="Shaw-Smith C."/>
            <person name="Shen H."/>
            <person name="Sheridan E.M."/>
            <person name="Shownkeen R."/>
            <person name="Skuce C.D."/>
            <person name="Smith M.L."/>
            <person name="Sotheran E.C."/>
            <person name="Steingruber H.E."/>
            <person name="Steward C.A."/>
            <person name="Storey R."/>
            <person name="Swann R.M."/>
            <person name="Swarbreck D."/>
            <person name="Tabor P.E."/>
            <person name="Taudien S."/>
            <person name="Taylor T."/>
            <person name="Teague B."/>
            <person name="Thomas K."/>
            <person name="Thorpe A."/>
            <person name="Timms K."/>
            <person name="Tracey A."/>
            <person name="Trevanion S."/>
            <person name="Tromans A.C."/>
            <person name="d'Urso M."/>
            <person name="Verduzco D."/>
            <person name="Villasana D."/>
            <person name="Waldron L."/>
            <person name="Wall M."/>
            <person name="Wang Q."/>
            <person name="Warren J."/>
            <person name="Warry G.L."/>
            <person name="Wei X."/>
            <person name="West A."/>
            <person name="Whitehead S.L."/>
            <person name="Whiteley M.N."/>
            <person name="Wilkinson J.E."/>
            <person name="Willey D.L."/>
            <person name="Williams G."/>
            <person name="Williams L."/>
            <person name="Williamson A."/>
            <person name="Williamson H."/>
            <person name="Wilming L."/>
            <person name="Woodmansey R.L."/>
            <person name="Wray P.W."/>
            <person name="Yen J."/>
            <person name="Zhang J."/>
            <person name="Zhou J."/>
            <person name="Zoghbi H."/>
            <person name="Zorilla S."/>
            <person name="Buck D."/>
            <person name="Reinhardt R."/>
            <person name="Poustka A."/>
            <person name="Rosenthal A."/>
            <person name="Lehrach H."/>
            <person name="Meindl A."/>
            <person name="Minx P.J."/>
            <person name="Hillier L.W."/>
            <person name="Willard H.F."/>
            <person name="Wilson R.K."/>
            <person name="Waterston R.H."/>
            <person name="Rice C.M."/>
            <person name="Vaudin M."/>
            <person name="Coulson A."/>
            <person name="Nelson D.L."/>
            <person name="Weinstock G."/>
            <person name="Sulston J.E."/>
            <person name="Durbin R.M."/>
            <person name="Hubbard T."/>
            <person name="Gibbs R.A."/>
            <person name="Beck S."/>
            <person name="Rogers J."/>
            <person name="Bentley D.R."/>
        </authorList>
    </citation>
    <scope>NUCLEOTIDE SEQUENCE [LARGE SCALE GENOMIC DNA]</scope>
</reference>
<reference key="2">
    <citation type="journal article" date="2008" name="Tissue Antigens">
        <title>An overview of the GAGE cancer/testis antigen family with the inclusion of newly identified members.</title>
        <authorList>
            <person name="Gjerstorff M.F."/>
            <person name="Ditzel H.J."/>
        </authorList>
    </citation>
    <scope>GAGE FAMILY</scope>
</reference>
<accession>Q4V326</accession>
<accession>A0A087WUD6</accession>
<accession>A6NFB1</accession>
<protein>
    <recommendedName>
        <fullName>G antigen 2E</fullName>
        <shortName>GAGE-2E</shortName>
    </recommendedName>
</protein>
<organism>
    <name type="scientific">Homo sapiens</name>
    <name type="common">Human</name>
    <dbReference type="NCBI Taxonomy" id="9606"/>
    <lineage>
        <taxon>Eukaryota</taxon>
        <taxon>Metazoa</taxon>
        <taxon>Chordata</taxon>
        <taxon>Craniata</taxon>
        <taxon>Vertebrata</taxon>
        <taxon>Euteleostomi</taxon>
        <taxon>Mammalia</taxon>
        <taxon>Eutheria</taxon>
        <taxon>Euarchontoglires</taxon>
        <taxon>Primates</taxon>
        <taxon>Haplorrhini</taxon>
        <taxon>Catarrhini</taxon>
        <taxon>Hominidae</taxon>
        <taxon>Homo</taxon>
    </lineage>
</organism>
<evidence type="ECO:0000256" key="1">
    <source>
        <dbReference type="SAM" id="MobiDB-lite"/>
    </source>
</evidence>
<evidence type="ECO:0000305" key="2"/>
<keyword id="KW-1185">Reference proteome</keyword>